<proteinExistence type="inferred from homology"/>
<feature type="chain" id="PRO_1000047874" description="Probable septum site-determining protein MinC">
    <location>
        <begin position="1"/>
        <end position="248"/>
    </location>
</feature>
<feature type="region of interest" description="Disordered" evidence="2">
    <location>
        <begin position="115"/>
        <end position="144"/>
    </location>
</feature>
<feature type="compositionally biased region" description="Pro residues" evidence="2">
    <location>
        <begin position="118"/>
        <end position="138"/>
    </location>
</feature>
<dbReference type="EMBL" id="AM039952">
    <property type="protein sequence ID" value="CAJ22889.1"/>
    <property type="molecule type" value="Genomic_DNA"/>
</dbReference>
<dbReference type="RefSeq" id="WP_011346732.1">
    <property type="nucleotide sequence ID" value="NZ_CP017190.1"/>
</dbReference>
<dbReference type="SMR" id="Q3BW74"/>
<dbReference type="STRING" id="456327.BJD11_16325"/>
<dbReference type="GeneID" id="97509571"/>
<dbReference type="KEGG" id="xcv:XCV1258"/>
<dbReference type="eggNOG" id="COG0850">
    <property type="taxonomic scope" value="Bacteria"/>
</dbReference>
<dbReference type="HOGENOM" id="CLU_067812_0_1_6"/>
<dbReference type="Proteomes" id="UP000007069">
    <property type="component" value="Chromosome"/>
</dbReference>
<dbReference type="GO" id="GO:0000902">
    <property type="term" value="P:cell morphogenesis"/>
    <property type="evidence" value="ECO:0007669"/>
    <property type="project" value="InterPro"/>
</dbReference>
<dbReference type="GO" id="GO:0000917">
    <property type="term" value="P:division septum assembly"/>
    <property type="evidence" value="ECO:0007669"/>
    <property type="project" value="UniProtKB-KW"/>
</dbReference>
<dbReference type="GO" id="GO:0051302">
    <property type="term" value="P:regulation of cell division"/>
    <property type="evidence" value="ECO:0007669"/>
    <property type="project" value="InterPro"/>
</dbReference>
<dbReference type="GO" id="GO:1901891">
    <property type="term" value="P:regulation of cell septum assembly"/>
    <property type="evidence" value="ECO:0007669"/>
    <property type="project" value="InterPro"/>
</dbReference>
<dbReference type="Gene3D" id="2.160.20.70">
    <property type="match status" value="1"/>
</dbReference>
<dbReference type="Gene3D" id="3.30.70.260">
    <property type="match status" value="1"/>
</dbReference>
<dbReference type="HAMAP" id="MF_00267">
    <property type="entry name" value="MinC"/>
    <property type="match status" value="1"/>
</dbReference>
<dbReference type="InterPro" id="IPR016098">
    <property type="entry name" value="CAP/MinC_C"/>
</dbReference>
<dbReference type="InterPro" id="IPR013033">
    <property type="entry name" value="MinC"/>
</dbReference>
<dbReference type="InterPro" id="IPR036145">
    <property type="entry name" value="MinC_C_sf"/>
</dbReference>
<dbReference type="InterPro" id="IPR007874">
    <property type="entry name" value="MinC_N"/>
</dbReference>
<dbReference type="InterPro" id="IPR005526">
    <property type="entry name" value="Septum_form_inhib_MinC_C"/>
</dbReference>
<dbReference type="NCBIfam" id="TIGR01222">
    <property type="entry name" value="minC"/>
    <property type="match status" value="1"/>
</dbReference>
<dbReference type="PANTHER" id="PTHR34108">
    <property type="entry name" value="SEPTUM SITE-DETERMINING PROTEIN MINC"/>
    <property type="match status" value="1"/>
</dbReference>
<dbReference type="PANTHER" id="PTHR34108:SF1">
    <property type="entry name" value="SEPTUM SITE-DETERMINING PROTEIN MINC"/>
    <property type="match status" value="1"/>
</dbReference>
<dbReference type="Pfam" id="PF03775">
    <property type="entry name" value="MinC_C"/>
    <property type="match status" value="1"/>
</dbReference>
<dbReference type="Pfam" id="PF05209">
    <property type="entry name" value="MinC_N"/>
    <property type="match status" value="1"/>
</dbReference>
<dbReference type="SUPFAM" id="SSF63848">
    <property type="entry name" value="Cell-division inhibitor MinC, C-terminal domain"/>
    <property type="match status" value="1"/>
</dbReference>
<keyword id="KW-0131">Cell cycle</keyword>
<keyword id="KW-0132">Cell division</keyword>
<keyword id="KW-0717">Septation</keyword>
<sequence>MASVNVDFEQAGELKIGQVGIANLRVRTLDVPRLVQEMRERVSRAPKLFGRAAVILDFGGLSQVPDLATAKALLDGLRDAGVLPVALAYGTSEIDLLSQQLGVPLLAKFRAQYEPTAVSPPPPPPPPARAEPAPPAARPAPGRMQRTAVRSGQQLYAENCDLTVLSTVGAGAEVIADGSIHIYGTLRGRALAGAQGNPDARIFCRDFHAELVAIAGHYKVLDDVPMDLRGKAVQVWLEQDQIKIAALD</sequence>
<protein>
    <recommendedName>
        <fullName evidence="1">Probable septum site-determining protein MinC</fullName>
    </recommendedName>
</protein>
<accession>Q3BW74</accession>
<gene>
    <name evidence="1" type="primary">minC</name>
    <name type="ordered locus">XCV1258</name>
</gene>
<name>MINC_XANE5</name>
<organism>
    <name type="scientific">Xanthomonas euvesicatoria pv. vesicatoria (strain 85-10)</name>
    <name type="common">Xanthomonas campestris pv. vesicatoria</name>
    <dbReference type="NCBI Taxonomy" id="316273"/>
    <lineage>
        <taxon>Bacteria</taxon>
        <taxon>Pseudomonadati</taxon>
        <taxon>Pseudomonadota</taxon>
        <taxon>Gammaproteobacteria</taxon>
        <taxon>Lysobacterales</taxon>
        <taxon>Lysobacteraceae</taxon>
        <taxon>Xanthomonas</taxon>
    </lineage>
</organism>
<reference key="1">
    <citation type="journal article" date="2005" name="J. Bacteriol.">
        <title>Insights into genome plasticity and pathogenicity of the plant pathogenic Bacterium Xanthomonas campestris pv. vesicatoria revealed by the complete genome sequence.</title>
        <authorList>
            <person name="Thieme F."/>
            <person name="Koebnik R."/>
            <person name="Bekel T."/>
            <person name="Berger C."/>
            <person name="Boch J."/>
            <person name="Buettner D."/>
            <person name="Caldana C."/>
            <person name="Gaigalat L."/>
            <person name="Goesmann A."/>
            <person name="Kay S."/>
            <person name="Kirchner O."/>
            <person name="Lanz C."/>
            <person name="Linke B."/>
            <person name="McHardy A.C."/>
            <person name="Meyer F."/>
            <person name="Mittenhuber G."/>
            <person name="Nies D.H."/>
            <person name="Niesbach-Kloesgen U."/>
            <person name="Patschkowski T."/>
            <person name="Rueckert C."/>
            <person name="Rupp O."/>
            <person name="Schneiker S."/>
            <person name="Schuster S.C."/>
            <person name="Vorhoelter F.J."/>
            <person name="Weber E."/>
            <person name="Puehler A."/>
            <person name="Bonas U."/>
            <person name="Bartels D."/>
            <person name="Kaiser O."/>
        </authorList>
    </citation>
    <scope>NUCLEOTIDE SEQUENCE [LARGE SCALE GENOMIC DNA]</scope>
    <source>
        <strain>85-10</strain>
    </source>
</reference>
<evidence type="ECO:0000255" key="1">
    <source>
        <dbReference type="HAMAP-Rule" id="MF_00267"/>
    </source>
</evidence>
<evidence type="ECO:0000256" key="2">
    <source>
        <dbReference type="SAM" id="MobiDB-lite"/>
    </source>
</evidence>
<comment type="function">
    <text evidence="1">Cell division inhibitor that blocks the formation of polar Z ring septums. Rapidly oscillates between the poles of the cell to destabilize FtsZ filaments that have formed before they mature into polar Z rings. Prevents FtsZ polymerization.</text>
</comment>
<comment type="subunit">
    <text evidence="1">Interacts with MinD and FtsZ.</text>
</comment>
<comment type="similarity">
    <text evidence="1">Belongs to the MinC family.</text>
</comment>